<organism>
    <name type="scientific">Rattus norvegicus</name>
    <name type="common">Rat</name>
    <dbReference type="NCBI Taxonomy" id="10116"/>
    <lineage>
        <taxon>Eukaryota</taxon>
        <taxon>Metazoa</taxon>
        <taxon>Chordata</taxon>
        <taxon>Craniata</taxon>
        <taxon>Vertebrata</taxon>
        <taxon>Euteleostomi</taxon>
        <taxon>Mammalia</taxon>
        <taxon>Eutheria</taxon>
        <taxon>Euarchontoglires</taxon>
        <taxon>Glires</taxon>
        <taxon>Rodentia</taxon>
        <taxon>Myomorpha</taxon>
        <taxon>Muroidea</taxon>
        <taxon>Muridae</taxon>
        <taxon>Murinae</taxon>
        <taxon>Rattus</taxon>
    </lineage>
</organism>
<proteinExistence type="evidence at protein level"/>
<protein>
    <recommendedName>
        <fullName evidence="7">Arachidonate 12-lipoxygenase, 12R-type</fullName>
        <shortName>12R-LOX</shortName>
        <shortName>12R-lipoxygenase</shortName>
        <ecNumber evidence="6">1.13.11.-</ecNumber>
    </recommendedName>
    <alternativeName>
        <fullName>Epidermis-type lipoxygenase 12</fullName>
    </alternativeName>
</protein>
<feature type="chain" id="PRO_0000244486" description="Arachidonate 12-lipoxygenase, 12R-type">
    <location>
        <begin position="1"/>
        <end position="701"/>
    </location>
</feature>
<feature type="domain" description="PLAT" evidence="4">
    <location>
        <begin position="2"/>
        <end position="119"/>
    </location>
</feature>
<feature type="domain" description="Lipoxygenase" evidence="5">
    <location>
        <begin position="120"/>
        <end position="701"/>
    </location>
</feature>
<feature type="binding site" evidence="5">
    <location>
        <position position="398"/>
    </location>
    <ligand>
        <name>Fe cation</name>
        <dbReference type="ChEBI" id="CHEBI:24875"/>
        <note>catalytic</note>
    </ligand>
</feature>
<feature type="binding site" evidence="5">
    <location>
        <position position="403"/>
    </location>
    <ligand>
        <name>Fe cation</name>
        <dbReference type="ChEBI" id="CHEBI:24875"/>
        <note>catalytic</note>
    </ligand>
</feature>
<feature type="binding site" evidence="5">
    <location>
        <position position="578"/>
    </location>
    <ligand>
        <name>Fe cation</name>
        <dbReference type="ChEBI" id="CHEBI:24875"/>
        <note>catalytic</note>
    </ligand>
</feature>
<feature type="binding site" evidence="5">
    <location>
        <position position="582"/>
    </location>
    <ligand>
        <name>Fe cation</name>
        <dbReference type="ChEBI" id="CHEBI:24875"/>
        <note>catalytic</note>
    </ligand>
</feature>
<feature type="binding site" evidence="5">
    <location>
        <position position="701"/>
    </location>
    <ligand>
        <name>Fe cation</name>
        <dbReference type="ChEBI" id="CHEBI:24875"/>
        <note>catalytic</note>
    </ligand>
</feature>
<feature type="sequence conflict" description="In Ref. 1; AAX85362." evidence="7" ref="1">
    <original>H</original>
    <variation>L</variation>
    <location>
        <position position="276"/>
    </location>
</feature>
<accession>Q2KMM4</accession>
<accession>Q2KMM5</accession>
<dbReference type="EC" id="1.13.11.-" evidence="6"/>
<dbReference type="EMBL" id="AY903231">
    <property type="protein sequence ID" value="AAX85361.1"/>
    <property type="molecule type" value="mRNA"/>
</dbReference>
<dbReference type="EMBL" id="AY903232">
    <property type="protein sequence ID" value="AAX85362.1"/>
    <property type="molecule type" value="mRNA"/>
</dbReference>
<dbReference type="EMBL" id="AY903233">
    <property type="protein sequence ID" value="AAX85363.1"/>
    <property type="molecule type" value="mRNA"/>
</dbReference>
<dbReference type="RefSeq" id="NP_001034466.1">
    <property type="nucleotide sequence ID" value="NM_001039377.1"/>
</dbReference>
<dbReference type="SMR" id="Q2KMM4"/>
<dbReference type="FunCoup" id="Q2KMM4">
    <property type="interactions" value="16"/>
</dbReference>
<dbReference type="STRING" id="10116.ENSRNOP00000033009"/>
<dbReference type="PhosphoSitePlus" id="Q2KMM4"/>
<dbReference type="PaxDb" id="10116-ENSRNOP00000033009"/>
<dbReference type="GeneID" id="287425"/>
<dbReference type="KEGG" id="rno:287425"/>
<dbReference type="UCSC" id="RGD:1305330">
    <property type="organism name" value="rat"/>
</dbReference>
<dbReference type="AGR" id="RGD:1305330"/>
<dbReference type="CTD" id="242"/>
<dbReference type="RGD" id="1305330">
    <property type="gene designation" value="Alox12b"/>
</dbReference>
<dbReference type="eggNOG" id="ENOG502SJSP">
    <property type="taxonomic scope" value="Eukaryota"/>
</dbReference>
<dbReference type="InParanoid" id="Q2KMM4"/>
<dbReference type="OrthoDB" id="407298at2759"/>
<dbReference type="PhylomeDB" id="Q2KMM4"/>
<dbReference type="Reactome" id="R-RNO-2142712">
    <property type="pathway name" value="Synthesis of 12-eicosatetraenoic acid derivatives"/>
</dbReference>
<dbReference type="UniPathway" id="UPA00222"/>
<dbReference type="UniPathway" id="UPA00881"/>
<dbReference type="PRO" id="PR:Q2KMM4"/>
<dbReference type="Proteomes" id="UP000002494">
    <property type="component" value="Unplaced"/>
</dbReference>
<dbReference type="GO" id="GO:0016020">
    <property type="term" value="C:membrane"/>
    <property type="evidence" value="ECO:0007669"/>
    <property type="project" value="GOC"/>
</dbReference>
<dbReference type="GO" id="GO:0048471">
    <property type="term" value="C:perinuclear region of cytoplasm"/>
    <property type="evidence" value="ECO:0000266"/>
    <property type="project" value="RGD"/>
</dbReference>
<dbReference type="GO" id="GO:0106237">
    <property type="term" value="F:arachidonate 12(R)-lipoxygenase activity"/>
    <property type="evidence" value="ECO:0007669"/>
    <property type="project" value="RHEA"/>
</dbReference>
<dbReference type="GO" id="GO:0004052">
    <property type="term" value="F:arachidonate 12(S)-lipoxygenase activity"/>
    <property type="evidence" value="ECO:0000250"/>
    <property type="project" value="UniProtKB"/>
</dbReference>
<dbReference type="GO" id="GO:0047677">
    <property type="term" value="F:arachidonate 8(R)-lipoxygenase activity"/>
    <property type="evidence" value="ECO:0000266"/>
    <property type="project" value="RGD"/>
</dbReference>
<dbReference type="GO" id="GO:0005506">
    <property type="term" value="F:iron ion binding"/>
    <property type="evidence" value="ECO:0007669"/>
    <property type="project" value="InterPro"/>
</dbReference>
<dbReference type="GO" id="GO:1990136">
    <property type="term" value="F:linoleate 9S-lipoxygenase activity"/>
    <property type="evidence" value="ECO:0000250"/>
    <property type="project" value="UniProtKB"/>
</dbReference>
<dbReference type="GO" id="GO:0016702">
    <property type="term" value="F:oxidoreductase activity, acting on single donors with incorporation of molecular oxygen, incorporation of two atoms of oxygen"/>
    <property type="evidence" value="ECO:0000266"/>
    <property type="project" value="RGD"/>
</dbReference>
<dbReference type="GO" id="GO:0019369">
    <property type="term" value="P:arachidonate metabolic process"/>
    <property type="evidence" value="ECO:0000314"/>
    <property type="project" value="UniProtKB"/>
</dbReference>
<dbReference type="GO" id="GO:0046513">
    <property type="term" value="P:ceramide biosynthetic process"/>
    <property type="evidence" value="ECO:0000250"/>
    <property type="project" value="UniProtKB"/>
</dbReference>
<dbReference type="GO" id="GO:0061436">
    <property type="term" value="P:establishment of skin barrier"/>
    <property type="evidence" value="ECO:0000250"/>
    <property type="project" value="UniProtKB"/>
</dbReference>
<dbReference type="GO" id="GO:0051122">
    <property type="term" value="P:hepoxilin biosynthetic process"/>
    <property type="evidence" value="ECO:0000314"/>
    <property type="project" value="UniProtKB"/>
</dbReference>
<dbReference type="GO" id="GO:0043651">
    <property type="term" value="P:linoleic acid metabolic process"/>
    <property type="evidence" value="ECO:0000250"/>
    <property type="project" value="UniProtKB"/>
</dbReference>
<dbReference type="GO" id="GO:0034440">
    <property type="term" value="P:lipid oxidation"/>
    <property type="evidence" value="ECO:0000318"/>
    <property type="project" value="GO_Central"/>
</dbReference>
<dbReference type="GO" id="GO:0019372">
    <property type="term" value="P:lipoxygenase pathway"/>
    <property type="evidence" value="ECO:0000250"/>
    <property type="project" value="UniProtKB"/>
</dbReference>
<dbReference type="GO" id="GO:0010628">
    <property type="term" value="P:positive regulation of gene expression"/>
    <property type="evidence" value="ECO:0000250"/>
    <property type="project" value="UniProtKB"/>
</dbReference>
<dbReference type="GO" id="GO:0043410">
    <property type="term" value="P:positive regulation of MAPK cascade"/>
    <property type="evidence" value="ECO:0000250"/>
    <property type="project" value="UniProtKB"/>
</dbReference>
<dbReference type="GO" id="GO:0070257">
    <property type="term" value="P:positive regulation of mucus secretion"/>
    <property type="evidence" value="ECO:0000250"/>
    <property type="project" value="UniProtKB"/>
</dbReference>
<dbReference type="GO" id="GO:0006497">
    <property type="term" value="P:protein lipidation"/>
    <property type="evidence" value="ECO:0000250"/>
    <property type="project" value="UniProtKB"/>
</dbReference>
<dbReference type="GO" id="GO:0006665">
    <property type="term" value="P:sphingolipid metabolic process"/>
    <property type="evidence" value="ECO:0000250"/>
    <property type="project" value="UniProtKB"/>
</dbReference>
<dbReference type="CDD" id="cd01753">
    <property type="entry name" value="PLAT_LOX"/>
    <property type="match status" value="1"/>
</dbReference>
<dbReference type="FunFam" id="3.10.450.60:FF:000001">
    <property type="entry name" value="arachidonate 12-lipoxygenase, 12R-type"/>
    <property type="match status" value="1"/>
</dbReference>
<dbReference type="FunFam" id="1.20.245.10:FF:000001">
    <property type="entry name" value="Arachidonate 5-lipoxygenase a"/>
    <property type="match status" value="1"/>
</dbReference>
<dbReference type="FunFam" id="2.60.60.20:FF:000002">
    <property type="entry name" value="Arachidonate 5-lipoxygenase a"/>
    <property type="match status" value="1"/>
</dbReference>
<dbReference type="Gene3D" id="3.10.450.60">
    <property type="match status" value="1"/>
</dbReference>
<dbReference type="Gene3D" id="1.20.245.10">
    <property type="entry name" value="Lipoxygenase-1, Domain 5"/>
    <property type="match status" value="1"/>
</dbReference>
<dbReference type="Gene3D" id="2.60.60.20">
    <property type="entry name" value="PLAT/LH2 domain"/>
    <property type="match status" value="1"/>
</dbReference>
<dbReference type="InterPro" id="IPR000907">
    <property type="entry name" value="LipOase"/>
</dbReference>
<dbReference type="InterPro" id="IPR013819">
    <property type="entry name" value="LipOase_C"/>
</dbReference>
<dbReference type="InterPro" id="IPR036226">
    <property type="entry name" value="LipOase_C_sf"/>
</dbReference>
<dbReference type="InterPro" id="IPR020834">
    <property type="entry name" value="LipOase_CS"/>
</dbReference>
<dbReference type="InterPro" id="IPR020833">
    <property type="entry name" value="LipOase_Fe_BS"/>
</dbReference>
<dbReference type="InterPro" id="IPR001885">
    <property type="entry name" value="LipOase_mml"/>
</dbReference>
<dbReference type="InterPro" id="IPR001024">
    <property type="entry name" value="PLAT/LH2_dom"/>
</dbReference>
<dbReference type="InterPro" id="IPR036392">
    <property type="entry name" value="PLAT/LH2_dom_sf"/>
</dbReference>
<dbReference type="InterPro" id="IPR042062">
    <property type="entry name" value="PLAT_LOX_verte"/>
</dbReference>
<dbReference type="PANTHER" id="PTHR11771">
    <property type="entry name" value="LIPOXYGENASE"/>
    <property type="match status" value="1"/>
</dbReference>
<dbReference type="Pfam" id="PF00305">
    <property type="entry name" value="Lipoxygenase"/>
    <property type="match status" value="1"/>
</dbReference>
<dbReference type="Pfam" id="PF01477">
    <property type="entry name" value="PLAT"/>
    <property type="match status" value="1"/>
</dbReference>
<dbReference type="PRINTS" id="PR00087">
    <property type="entry name" value="LIPOXYGENASE"/>
</dbReference>
<dbReference type="PRINTS" id="PR00467">
    <property type="entry name" value="MAMLPOXGNASE"/>
</dbReference>
<dbReference type="SMART" id="SM00308">
    <property type="entry name" value="LH2"/>
    <property type="match status" value="1"/>
</dbReference>
<dbReference type="SUPFAM" id="SSF49723">
    <property type="entry name" value="Lipase/lipooxygenase domain (PLAT/LH2 domain)"/>
    <property type="match status" value="1"/>
</dbReference>
<dbReference type="SUPFAM" id="SSF48484">
    <property type="entry name" value="Lipoxigenase"/>
    <property type="match status" value="1"/>
</dbReference>
<dbReference type="PROSITE" id="PS00711">
    <property type="entry name" value="LIPOXYGENASE_1"/>
    <property type="match status" value="1"/>
</dbReference>
<dbReference type="PROSITE" id="PS00081">
    <property type="entry name" value="LIPOXYGENASE_2"/>
    <property type="match status" value="1"/>
</dbReference>
<dbReference type="PROSITE" id="PS51393">
    <property type="entry name" value="LIPOXYGENASE_3"/>
    <property type="match status" value="1"/>
</dbReference>
<dbReference type="PROSITE" id="PS50095">
    <property type="entry name" value="PLAT"/>
    <property type="match status" value="1"/>
</dbReference>
<reference evidence="9" key="1">
    <citation type="journal article" date="2004" name="Folia Biol. (Praha)">
        <title>Molecular analysis of the sex hormone-binding globulin gene in the rat hypodactylous mutation (Hd).</title>
        <authorList>
            <person name="Liska F."/>
            <person name="Goesele C."/>
            <person name="Kren V."/>
            <person name="Huebner N."/>
            <person name="Krenova D."/>
        </authorList>
    </citation>
    <scope>NUCLEOTIDE SEQUENCE [MRNA]</scope>
    <source>
        <strain>Brown Norway/Cub</strain>
        <strain evidence="9">SHR/OlaIpcv</strain>
        <strain>Wistar Hd</strain>
        <tissue evidence="9">Testis</tissue>
    </source>
</reference>
<reference key="2">
    <citation type="journal article" date="2013" name="FASEB J.">
        <title>Systematic analysis of rat 12/15-lipoxygenase enzymes reveals critical role for spinal eLOX3 hepoxilin synthase activity in inflammatory hyperalgesia.</title>
        <authorList>
            <person name="Gregus A.M."/>
            <person name="Dumlao D.S."/>
            <person name="Wei S.C."/>
            <person name="Norris P.C."/>
            <person name="Catella L.C."/>
            <person name="Meyerstein F.G."/>
            <person name="Buczynski M.W."/>
            <person name="Steinauer J.J."/>
            <person name="Fitzsimmons B.L."/>
            <person name="Yaksh T.L."/>
            <person name="Dennis E.A."/>
        </authorList>
    </citation>
    <scope>FUNCTION</scope>
    <scope>CATALYTIC ACTIVITY</scope>
</reference>
<comment type="function">
    <text evidence="2 6">Catalyzes the regio and stereo-specific incorporation of a single molecule of dioxygen into free and esterified polyunsaturated fatty acids generating lipid hydroperoxides that can be further reduced to the corresponding hydroxy species (PubMed:23382512). In the skin, acts upstream of ALOXE3 on the lineolate moiety of esterified omega-hydroxyacyl-sphingosine (EOS) ceramides to produce an epoxy-ketone derivative, a crucial step in the conjugation of omega-hydroxyceramide to membrane proteins. Therefore plays a crucial role in the synthesis of corneocytes lipid envelope and the establishment of the skin barrier to water loss. May also play a role in the regulation of the expression of airway mucins (By similarity).</text>
</comment>
<comment type="catalytic activity">
    <reaction evidence="6">
        <text>(5Z,8Z,11Z,14Z)-eicosatetraenoate + O2 = (12R)-hydroperoxy-(5Z,8Z,10E,14Z)-eicosatetraenoate</text>
        <dbReference type="Rhea" id="RHEA:41336"/>
        <dbReference type="ChEBI" id="CHEBI:15379"/>
        <dbReference type="ChEBI" id="CHEBI:32395"/>
        <dbReference type="ChEBI" id="CHEBI:75230"/>
    </reaction>
    <physiologicalReaction direction="left-to-right" evidence="8">
        <dbReference type="Rhea" id="RHEA:41337"/>
    </physiologicalReaction>
</comment>
<comment type="catalytic activity">
    <reaction evidence="2">
        <text>N-[omega-(9Z,12Z)-octadecadienoyloxy]acyl-beta-D-glucosyl-(1&lt;-&gt;1)-octadecasphing-4E-enine + O2 = N-[omega-(9R)-hydroperoxy-(10E,12Z)-octadecadienoyloxy]acyl-beta-D-glucosyl-(1&lt;-&gt;1)-octadecasphing-4E-enine</text>
        <dbReference type="Rhea" id="RHEA:40495"/>
        <dbReference type="ChEBI" id="CHEBI:15379"/>
        <dbReference type="ChEBI" id="CHEBI:134621"/>
        <dbReference type="ChEBI" id="CHEBI:134624"/>
    </reaction>
    <physiologicalReaction direction="left-to-right" evidence="2">
        <dbReference type="Rhea" id="RHEA:40496"/>
    </physiologicalReaction>
</comment>
<comment type="catalytic activity">
    <reaction evidence="2">
        <text>a N-[omega-(9Z,12Z)-octadecadienoyloxy]-acylsphin-4E-enine + O2 = a N-[omega-(9R)-hydroperoxy-(10E,12Z)-octadecadienoyloxy]-acylsphin-4E-enine</text>
        <dbReference type="Rhea" id="RHEA:41239"/>
        <dbReference type="ChEBI" id="CHEBI:15379"/>
        <dbReference type="ChEBI" id="CHEBI:77888"/>
        <dbReference type="ChEBI" id="CHEBI:77889"/>
    </reaction>
    <physiologicalReaction direction="left-to-right" evidence="2">
        <dbReference type="Rhea" id="RHEA:41240"/>
    </physiologicalReaction>
</comment>
<comment type="catalytic activity">
    <reaction evidence="2">
        <text>(6Z,9Z,12Z)-octadecatrienoate + O2 = 10-hydroperoxy-(6Z,8E,12Z)-octadecatrienoate</text>
        <dbReference type="Rhea" id="RHEA:43476"/>
        <dbReference type="ChEBI" id="CHEBI:15379"/>
        <dbReference type="ChEBI" id="CHEBI:32391"/>
        <dbReference type="ChEBI" id="CHEBI:83342"/>
    </reaction>
    <physiologicalReaction direction="left-to-right" evidence="2">
        <dbReference type="Rhea" id="RHEA:43477"/>
    </physiologicalReaction>
</comment>
<comment type="catalytic activity">
    <reaction evidence="2">
        <text>(4Z,7Z,10Z,13Z,16Z,19Z)-docosahexaenoate + O2 = 14-hydroperoxy-(4Z,7Z,10Z,12E,16Z,19Z)-docosahexaenoate</text>
        <dbReference type="Rhea" id="RHEA:43472"/>
        <dbReference type="ChEBI" id="CHEBI:15379"/>
        <dbReference type="ChEBI" id="CHEBI:77016"/>
        <dbReference type="ChEBI" id="CHEBI:83336"/>
    </reaction>
    <physiologicalReaction direction="left-to-right" evidence="2">
        <dbReference type="Rhea" id="RHEA:43473"/>
    </physiologicalReaction>
</comment>
<comment type="catalytic activity">
    <reaction evidence="2">
        <text>(8Z,11Z,14Z)-eicosatrienoate + O2 = (8Z,10E,14Z)-12-hydroperoxyeicosatrienoate</text>
        <dbReference type="Rhea" id="RHEA:43468"/>
        <dbReference type="ChEBI" id="CHEBI:15379"/>
        <dbReference type="ChEBI" id="CHEBI:71589"/>
        <dbReference type="ChEBI" id="CHEBI:83334"/>
    </reaction>
    <physiologicalReaction direction="left-to-right" evidence="2">
        <dbReference type="Rhea" id="RHEA:43469"/>
    </physiologicalReaction>
</comment>
<comment type="catalytic activity">
    <reaction evidence="2">
        <text>(5Z,8Z,11Z,14Z,17Z)-eicosapentaenoate + O2 = (5Z,7Z,8Z,10E,14Z,17Z)-12-hydroperoxyeicosapentaenoate</text>
        <dbReference type="Rhea" id="RHEA:41344"/>
        <dbReference type="ChEBI" id="CHEBI:15379"/>
        <dbReference type="ChEBI" id="CHEBI:58562"/>
        <dbReference type="ChEBI" id="CHEBI:78078"/>
    </reaction>
    <physiologicalReaction direction="left-to-right" evidence="2">
        <dbReference type="Rhea" id="RHEA:41345"/>
    </physiologicalReaction>
</comment>
<comment type="catalytic activity">
    <reaction evidence="2">
        <text>(6Z,9Z,12Z)-octadecatrienoate + O2 = 10R-hydroperoxy-(6Z,8E,12Z)-octadecatrienoate</text>
        <dbReference type="Rhea" id="RHEA:41340"/>
        <dbReference type="ChEBI" id="CHEBI:15379"/>
        <dbReference type="ChEBI" id="CHEBI:32391"/>
        <dbReference type="ChEBI" id="CHEBI:78070"/>
    </reaction>
    <physiologicalReaction direction="left-to-right" evidence="2">
        <dbReference type="Rhea" id="RHEA:41341"/>
    </physiologicalReaction>
</comment>
<comment type="catalytic activity">
    <reaction evidence="1">
        <text>1-O-methyl-(5Z,8Z,11Z,14Z)-eicosatetraenoate + O2 = 1-O-methyl (5Z,8Z,10E,12R,14Z)-hydroperoxyiecosatetraenoate</text>
        <dbReference type="Rhea" id="RHEA:41311"/>
        <dbReference type="ChEBI" id="CHEBI:15379"/>
        <dbReference type="ChEBI" id="CHEBI:78033"/>
        <dbReference type="ChEBI" id="CHEBI:78034"/>
    </reaction>
    <physiologicalReaction direction="left-to-right" evidence="1">
        <dbReference type="Rhea" id="RHEA:41312"/>
    </physiologicalReaction>
</comment>
<comment type="catalytic activity">
    <reaction evidence="1">
        <text>1-O-methyl-(5Z,8Z,11Z,14Z)-eicosatetraenoate + O2 = 1-O-methyl-8-hydroperoxy-(5Z,9E,11Z,14Z)-eicosatetraenoate</text>
        <dbReference type="Rhea" id="RHEA:43480"/>
        <dbReference type="ChEBI" id="CHEBI:15379"/>
        <dbReference type="ChEBI" id="CHEBI:78033"/>
        <dbReference type="ChEBI" id="CHEBI:83344"/>
    </reaction>
    <physiologicalReaction direction="left-to-right" evidence="1">
        <dbReference type="Rhea" id="RHEA:43481"/>
    </physiologicalReaction>
</comment>
<comment type="catalytic activity">
    <reaction evidence="1">
        <text>1-O-methyl-(5Z,8Z,11Z,14Z)-eicosatetraenoate + O2 = 1-O-methyl-(8R)-hydroperoxy-(5Z,9E,11Z,14Z)-eicosatrienoate</text>
        <dbReference type="Rhea" id="RHEA:61868"/>
        <dbReference type="ChEBI" id="CHEBI:15379"/>
        <dbReference type="ChEBI" id="CHEBI:78033"/>
        <dbReference type="ChEBI" id="CHEBI:78180"/>
    </reaction>
    <physiologicalReaction direction="left-to-right" evidence="1">
        <dbReference type="Rhea" id="RHEA:61869"/>
    </physiologicalReaction>
</comment>
<comment type="catalytic activity">
    <reaction evidence="1">
        <text>1-O-methyl-(9Z,12Z)-octadecadienoate + O2 = 1-O-methyl-(9R)-hydroperoxy-(10E,12Z)-octadecadienoate</text>
        <dbReference type="Rhea" id="RHEA:61872"/>
        <dbReference type="ChEBI" id="CHEBI:15379"/>
        <dbReference type="ChEBI" id="CHEBI:69080"/>
        <dbReference type="ChEBI" id="CHEBI:145036"/>
    </reaction>
    <physiologicalReaction direction="left-to-right" evidence="1">
        <dbReference type="Rhea" id="RHEA:61873"/>
    </physiologicalReaction>
</comment>
<comment type="catalytic activity">
    <reaction evidence="1">
        <text>1-O-methyl-20-hydroxy-(5Z,8Z,11Z,14Z)-eicosatetraenoate + O2 = 1-O-methyl-8-hydroperoxy-20-hydroxy-(5Z,9E,11Z,14Z)-eicosatetraenoate</text>
        <dbReference type="Rhea" id="RHEA:61876"/>
        <dbReference type="ChEBI" id="CHEBI:15379"/>
        <dbReference type="ChEBI" id="CHEBI:145032"/>
        <dbReference type="ChEBI" id="CHEBI:145033"/>
    </reaction>
    <physiologicalReaction direction="left-to-right" evidence="1">
        <dbReference type="Rhea" id="RHEA:61877"/>
    </physiologicalReaction>
</comment>
<comment type="catalytic activity">
    <reaction evidence="1">
        <text>1-O-methyl-20-hydroxy-(5Z,8Z,11Z,14Z)-eicosatetraenoate + O2 = 1-O-methyl-12-hydroperoxy-20-hydroxy-(5Z,8Z,10E,14Z)-eicosatetraenoate</text>
        <dbReference type="Rhea" id="RHEA:61880"/>
        <dbReference type="ChEBI" id="CHEBI:15379"/>
        <dbReference type="ChEBI" id="CHEBI:145032"/>
        <dbReference type="ChEBI" id="CHEBI:145034"/>
    </reaction>
    <physiologicalReaction direction="left-to-right" evidence="1">
        <dbReference type="Rhea" id="RHEA:61881"/>
    </physiologicalReaction>
</comment>
<comment type="catalytic activity">
    <reaction evidence="1">
        <text>1-O-methyl-20-hydroxy-(5Z,8Z,11Z,14Z)-eicosatetraenoate + O2 = 1-O-methyl-9-hydroperoxy-20-hydroxy-(5Z,7E,11Z,14Z)-eicosatetraenoate</text>
        <dbReference type="Rhea" id="RHEA:61884"/>
        <dbReference type="ChEBI" id="CHEBI:15379"/>
        <dbReference type="ChEBI" id="CHEBI:145032"/>
        <dbReference type="ChEBI" id="CHEBI:145035"/>
    </reaction>
    <physiologicalReaction direction="left-to-right" evidence="1">
        <dbReference type="Rhea" id="RHEA:61885"/>
    </physiologicalReaction>
</comment>
<comment type="catalytic activity">
    <reaction evidence="1">
        <text>1-O-methyl-(9Z,12Z)-octadecadienoate + O2 = 1-O-methyl-(13S)-hydroperoxy-(9Z,11E)-octadecadienoate</text>
        <dbReference type="Rhea" id="RHEA:41756"/>
        <dbReference type="ChEBI" id="CHEBI:15379"/>
        <dbReference type="ChEBI" id="CHEBI:69080"/>
        <dbReference type="ChEBI" id="CHEBI:78040"/>
    </reaction>
    <physiologicalReaction direction="left-to-right" evidence="1">
        <dbReference type="Rhea" id="RHEA:41757"/>
    </physiologicalReaction>
</comment>
<comment type="cofactor">
    <cofactor evidence="5">
        <name>Fe cation</name>
        <dbReference type="ChEBI" id="CHEBI:24875"/>
    </cofactor>
    <text evidence="5">Binds 1 Fe cation per subunit.</text>
</comment>
<comment type="activity regulation">
    <text evidence="1">Increased by calcium.</text>
</comment>
<comment type="pathway">
    <text>Lipid metabolism; hydroperoxy eicosatetraenoic acid biosynthesis.</text>
</comment>
<comment type="pathway">
    <text>Lipid metabolism; sphingolipid metabolism.</text>
</comment>
<comment type="subcellular location">
    <subcellularLocation>
        <location evidence="5">Cytoplasm</location>
    </subcellularLocation>
    <subcellularLocation>
        <location evidence="2">Cytoplasm</location>
        <location evidence="2">Perinuclear region</location>
    </subcellularLocation>
</comment>
<comment type="similarity">
    <text evidence="3">Belongs to the lipoxygenase family.</text>
</comment>
<comment type="online information" name="Protein Spotlight">
    <link uri="https://www.proteinspotlight.org/back_issues/153/"/>
    <text>about water - Issue 153 of September 2013</text>
</comment>
<gene>
    <name evidence="10" type="primary">Alox12b</name>
</gene>
<keyword id="KW-0963">Cytoplasm</keyword>
<keyword id="KW-0223">Dioxygenase</keyword>
<keyword id="KW-0276">Fatty acid metabolism</keyword>
<keyword id="KW-0408">Iron</keyword>
<keyword id="KW-0443">Lipid metabolism</keyword>
<keyword id="KW-0479">Metal-binding</keyword>
<keyword id="KW-0560">Oxidoreductase</keyword>
<keyword id="KW-1185">Reference proteome</keyword>
<evidence type="ECO:0000250" key="1">
    <source>
        <dbReference type="UniProtKB" id="O70582"/>
    </source>
</evidence>
<evidence type="ECO:0000250" key="2">
    <source>
        <dbReference type="UniProtKB" id="O75342"/>
    </source>
</evidence>
<evidence type="ECO:0000255" key="3"/>
<evidence type="ECO:0000255" key="4">
    <source>
        <dbReference type="PROSITE-ProRule" id="PRU00152"/>
    </source>
</evidence>
<evidence type="ECO:0000255" key="5">
    <source>
        <dbReference type="PROSITE-ProRule" id="PRU00726"/>
    </source>
</evidence>
<evidence type="ECO:0000269" key="6">
    <source>
    </source>
</evidence>
<evidence type="ECO:0000305" key="7"/>
<evidence type="ECO:0000305" key="8">
    <source>
    </source>
</evidence>
<evidence type="ECO:0000312" key="9">
    <source>
        <dbReference type="EMBL" id="AAX85363.1"/>
    </source>
</evidence>
<evidence type="ECO:0000312" key="10">
    <source>
        <dbReference type="RGD" id="1305330"/>
    </source>
</evidence>
<sequence length="701" mass="80741">MATYKVKVATGTDFFSGTLDSISLTIVGTQGESHKQRLNHFGRDFATGAVDDYTVQCQQDLGELIIIRLHKEPHSFLPKDPWYCNYVQICAPNCRVYHFPAYQWMDGYETLSLREATGKTTADDTLPILLEHRQEEIRAKKDFYHWRVFVPGLPNYVDIPSYHPPPRRCRNPNRPEWNGYIPGFPILINIKATRFLNLNLRFSFVKTASFFYRLGPMALAFKLRGLVDRKRSWKRLKDIKNIFPATKTVVSEYVAEHWTEDSFFGYQYLNGINPGHIRRCMQIPDKFPVTDEMVAPFLGEGTCLQAELEKGNIYLADYRILDGIPTVELNGQKQHHCAPICLLHFGPDGNMMPIAIQLSQTPGPDCPIFLPNDSEWDWLLAKTWVRYAEFYSHEAVAHLLESHLIGEAFCLALLRNLPMCHPLYKLLIPHTRYNVQINSIGRALLLNKGGLSARAMSLGLEGFAQVMVRGLSELTYKSLCIPNDFVERGVQDLPGYYFRDDSLAVWYAMERYVTEIITYYYPNDAAVEGDPELQCWVQEIFKECLLERESSGFPTCLRTVPELIEYVTMVMYTCSARHAAVNTGQLEYTSWMPNFPSSMRNPPMQSKGLTTLQTFMDTLPDVKTTCIVLLVLWTLCREPDDRRPLGHFPDIHFVEEAPRRSMEAFRQNLNQISHNIRQRNKCLNLPYYYLDPVLIENSISI</sequence>
<name>LX12B_RAT</name>